<feature type="chain" id="PRO_0000029795" description="Phosphatidylserine decarboxylase beta chain" evidence="1">
    <location>
        <begin position="1"/>
        <end position="183"/>
    </location>
</feature>
<feature type="chain" id="PRO_0000029796" description="Phosphatidylserine decarboxylase alpha chain" evidence="1">
    <location>
        <begin position="184"/>
        <end position="215"/>
    </location>
</feature>
<feature type="active site" description="Schiff-base intermediate with substrate; via pyruvic acid" evidence="1">
    <location>
        <position position="184"/>
    </location>
</feature>
<feature type="site" description="Cleavage (non-hydrolytic); by autocatalysis" evidence="1">
    <location>
        <begin position="183"/>
        <end position="184"/>
    </location>
</feature>
<feature type="modified residue" description="Pyruvic acid (Ser); by autocatalysis" evidence="1">
    <location>
        <position position="184"/>
    </location>
</feature>
<gene>
    <name evidence="1" type="primary">psd</name>
    <name type="ordered locus">RSc2074</name>
    <name type="ORF">RS03639</name>
</gene>
<reference key="1">
    <citation type="journal article" date="2002" name="Nature">
        <title>Genome sequence of the plant pathogen Ralstonia solanacearum.</title>
        <authorList>
            <person name="Salanoubat M."/>
            <person name="Genin S."/>
            <person name="Artiguenave F."/>
            <person name="Gouzy J."/>
            <person name="Mangenot S."/>
            <person name="Arlat M."/>
            <person name="Billault A."/>
            <person name="Brottier P."/>
            <person name="Camus J.-C."/>
            <person name="Cattolico L."/>
            <person name="Chandler M."/>
            <person name="Choisne N."/>
            <person name="Claudel-Renard C."/>
            <person name="Cunnac S."/>
            <person name="Demange N."/>
            <person name="Gaspin C."/>
            <person name="Lavie M."/>
            <person name="Moisan A."/>
            <person name="Robert C."/>
            <person name="Saurin W."/>
            <person name="Schiex T."/>
            <person name="Siguier P."/>
            <person name="Thebault P."/>
            <person name="Whalen M."/>
            <person name="Wincker P."/>
            <person name="Levy M."/>
            <person name="Weissenbach J."/>
            <person name="Boucher C.A."/>
        </authorList>
    </citation>
    <scope>NUCLEOTIDE SEQUENCE [LARGE SCALE GENOMIC DNA]</scope>
    <source>
        <strain>ATCC BAA-1114 / GMI1000</strain>
    </source>
</reference>
<proteinExistence type="inferred from homology"/>
<organism>
    <name type="scientific">Ralstonia nicotianae (strain ATCC BAA-1114 / GMI1000)</name>
    <name type="common">Ralstonia solanacearum</name>
    <dbReference type="NCBI Taxonomy" id="267608"/>
    <lineage>
        <taxon>Bacteria</taxon>
        <taxon>Pseudomonadati</taxon>
        <taxon>Pseudomonadota</taxon>
        <taxon>Betaproteobacteria</taxon>
        <taxon>Burkholderiales</taxon>
        <taxon>Burkholderiaceae</taxon>
        <taxon>Ralstonia</taxon>
        <taxon>Ralstonia solanacearum species complex</taxon>
    </lineage>
</organism>
<keyword id="KW-1003">Cell membrane</keyword>
<keyword id="KW-0210">Decarboxylase</keyword>
<keyword id="KW-0444">Lipid biosynthesis</keyword>
<keyword id="KW-0443">Lipid metabolism</keyword>
<keyword id="KW-0456">Lyase</keyword>
<keyword id="KW-0472">Membrane</keyword>
<keyword id="KW-0594">Phospholipid biosynthesis</keyword>
<keyword id="KW-1208">Phospholipid metabolism</keyword>
<keyword id="KW-0670">Pyruvate</keyword>
<keyword id="KW-1185">Reference proteome</keyword>
<keyword id="KW-0865">Zymogen</keyword>
<sequence length="215" mass="23868">MNNTYPHPIIAREGWPYLGGIFIVTLIVHAAAGLGWAWPFWLLTVFVLQFFRDPARTVPTQANAILSPADGRIVAVEQVRDPYADRDALKISVFMNVFNVHSNRAPVDGTVQQVQYFPGKFVNADLDKASLENERNAVVLRRADGQVVTSVQVAGLIARRILCYTKVGETLARGQRYGFIRFGSRVDVYLPLTARPRVTIGEKVSATLTVLAELD</sequence>
<evidence type="ECO:0000255" key="1">
    <source>
        <dbReference type="HAMAP-Rule" id="MF_00664"/>
    </source>
</evidence>
<dbReference type="EC" id="4.1.1.65" evidence="1"/>
<dbReference type="EMBL" id="AL646052">
    <property type="protein sequence ID" value="CAD15781.1"/>
    <property type="molecule type" value="Genomic_DNA"/>
</dbReference>
<dbReference type="RefSeq" id="WP_011002006.1">
    <property type="nucleotide sequence ID" value="NC_003295.1"/>
</dbReference>
<dbReference type="STRING" id="267608.RSc2074"/>
<dbReference type="EnsemblBacteria" id="CAD15781">
    <property type="protein sequence ID" value="CAD15781"/>
    <property type="gene ID" value="RSc2074"/>
</dbReference>
<dbReference type="KEGG" id="rso:RSc2074"/>
<dbReference type="eggNOG" id="COG0688">
    <property type="taxonomic scope" value="Bacteria"/>
</dbReference>
<dbReference type="HOGENOM" id="CLU_072492_0_0_4"/>
<dbReference type="UniPathway" id="UPA00558">
    <property type="reaction ID" value="UER00616"/>
</dbReference>
<dbReference type="Proteomes" id="UP000001436">
    <property type="component" value="Chromosome"/>
</dbReference>
<dbReference type="GO" id="GO:0005886">
    <property type="term" value="C:plasma membrane"/>
    <property type="evidence" value="ECO:0007669"/>
    <property type="project" value="UniProtKB-SubCell"/>
</dbReference>
<dbReference type="GO" id="GO:0004609">
    <property type="term" value="F:phosphatidylserine decarboxylase activity"/>
    <property type="evidence" value="ECO:0007669"/>
    <property type="project" value="UniProtKB-UniRule"/>
</dbReference>
<dbReference type="GO" id="GO:0006646">
    <property type="term" value="P:phosphatidylethanolamine biosynthetic process"/>
    <property type="evidence" value="ECO:0007669"/>
    <property type="project" value="UniProtKB-UniRule"/>
</dbReference>
<dbReference type="HAMAP" id="MF_00664">
    <property type="entry name" value="PS_decarb_PSD_A"/>
    <property type="match status" value="1"/>
</dbReference>
<dbReference type="InterPro" id="IPR003817">
    <property type="entry name" value="PS_Dcarbxylase"/>
</dbReference>
<dbReference type="InterPro" id="IPR033175">
    <property type="entry name" value="PSD-A"/>
</dbReference>
<dbReference type="NCBIfam" id="TIGR00164">
    <property type="entry name" value="AS_decarb"/>
    <property type="match status" value="1"/>
</dbReference>
<dbReference type="NCBIfam" id="NF003678">
    <property type="entry name" value="PRK05305.1-2"/>
    <property type="match status" value="1"/>
</dbReference>
<dbReference type="NCBIfam" id="NF003680">
    <property type="entry name" value="PRK05305.1-5"/>
    <property type="match status" value="1"/>
</dbReference>
<dbReference type="PANTHER" id="PTHR35809">
    <property type="entry name" value="ARCHAETIDYLSERINE DECARBOXYLASE PROENZYME-RELATED"/>
    <property type="match status" value="1"/>
</dbReference>
<dbReference type="PANTHER" id="PTHR35809:SF1">
    <property type="entry name" value="ARCHAETIDYLSERINE DECARBOXYLASE PROENZYME-RELATED"/>
    <property type="match status" value="1"/>
</dbReference>
<dbReference type="Pfam" id="PF02666">
    <property type="entry name" value="PS_Dcarbxylase"/>
    <property type="match status" value="1"/>
</dbReference>
<name>PSD_RALN1</name>
<protein>
    <recommendedName>
        <fullName evidence="1">Phosphatidylserine decarboxylase proenzyme</fullName>
        <ecNumber evidence="1">4.1.1.65</ecNumber>
    </recommendedName>
    <component>
        <recommendedName>
            <fullName evidence="1">Phosphatidylserine decarboxylase alpha chain</fullName>
        </recommendedName>
    </component>
    <component>
        <recommendedName>
            <fullName evidence="1">Phosphatidylserine decarboxylase beta chain</fullName>
        </recommendedName>
    </component>
</protein>
<comment type="function">
    <text evidence="1">Catalyzes the formation of phosphatidylethanolamine (PtdEtn) from phosphatidylserine (PtdSer).</text>
</comment>
<comment type="catalytic activity">
    <reaction evidence="1">
        <text>a 1,2-diacyl-sn-glycero-3-phospho-L-serine + H(+) = a 1,2-diacyl-sn-glycero-3-phosphoethanolamine + CO2</text>
        <dbReference type="Rhea" id="RHEA:20828"/>
        <dbReference type="ChEBI" id="CHEBI:15378"/>
        <dbReference type="ChEBI" id="CHEBI:16526"/>
        <dbReference type="ChEBI" id="CHEBI:57262"/>
        <dbReference type="ChEBI" id="CHEBI:64612"/>
        <dbReference type="EC" id="4.1.1.65"/>
    </reaction>
</comment>
<comment type="cofactor">
    <cofactor evidence="1">
        <name>pyruvate</name>
        <dbReference type="ChEBI" id="CHEBI:15361"/>
    </cofactor>
    <text evidence="1">Binds 1 pyruvoyl group covalently per subunit.</text>
</comment>
<comment type="pathway">
    <text evidence="1">Phospholipid metabolism; phosphatidylethanolamine biosynthesis; phosphatidylethanolamine from CDP-diacylglycerol: step 2/2.</text>
</comment>
<comment type="subunit">
    <text evidence="1">Heterodimer of a large membrane-associated beta subunit and a small pyruvoyl-containing alpha subunit.</text>
</comment>
<comment type="subcellular location">
    <subcellularLocation>
        <location evidence="1">Cell membrane</location>
        <topology evidence="1">Peripheral membrane protein</topology>
    </subcellularLocation>
</comment>
<comment type="PTM">
    <text evidence="1">Is synthesized initially as an inactive proenzyme. Formation of the active enzyme involves a self-maturation process in which the active site pyruvoyl group is generated from an internal serine residue via an autocatalytic post-translational modification. Two non-identical subunits are generated from the proenzyme in this reaction, and the pyruvate is formed at the N-terminus of the alpha chain, which is derived from the carboxyl end of the proenzyme. The post-translation cleavage follows an unusual pathway, termed non-hydrolytic serinolysis, in which the side chain hydroxyl group of the serine supplies its oxygen atom to form the C-terminus of the beta chain, while the remainder of the serine residue undergoes an oxidative deamination to produce ammonia and the pyruvoyl prosthetic group on the alpha chain.</text>
</comment>
<comment type="similarity">
    <text evidence="1">Belongs to the phosphatidylserine decarboxylase family. PSD-A subfamily.</text>
</comment>
<accession>Q8XXN9</accession>